<keyword id="KW-0678">Repressor</keyword>
<keyword id="KW-0687">Ribonucleoprotein</keyword>
<keyword id="KW-0689">Ribosomal protein</keyword>
<keyword id="KW-0694">RNA-binding</keyword>
<keyword id="KW-0699">rRNA-binding</keyword>
<keyword id="KW-0810">Translation regulation</keyword>
<keyword id="KW-0820">tRNA-binding</keyword>
<reference key="1">
    <citation type="journal article" date="2007" name="PLoS Genet.">
        <title>The complete genome sequence of Yersinia pseudotuberculosis IP31758, the causative agent of Far East scarlet-like fever.</title>
        <authorList>
            <person name="Eppinger M."/>
            <person name="Rosovitz M.J."/>
            <person name="Fricke W.F."/>
            <person name="Rasko D.A."/>
            <person name="Kokorina G."/>
            <person name="Fayolle C."/>
            <person name="Lindler L.E."/>
            <person name="Carniel E."/>
            <person name="Ravel J."/>
        </authorList>
    </citation>
    <scope>NUCLEOTIDE SEQUENCE [LARGE SCALE GENOMIC DNA]</scope>
    <source>
        <strain>IP 31758</strain>
    </source>
</reference>
<proteinExistence type="inferred from homology"/>
<sequence length="234" mass="24803">MAKLTKRMRVIRDKVDVTKQYDINEAVALLKELATAKFVESVDVAVNLGIDARKSDQNVRGATVLPHGTGRSVRVAVFAQGANAEAAKEAGAELVGMDDLADQIKKGEMNFDVVIASPDAMRVVGQLGQILGPRGLMPNPKVGTVTPNVAEAVKNAKAGQVRYRNDKNGIIHTTIGKVDFDSDKLKENLESLVVALKKAKPATAKGIYIKKISLSTTMGAGVAIDQSGLTAVVN</sequence>
<evidence type="ECO:0000255" key="1">
    <source>
        <dbReference type="HAMAP-Rule" id="MF_01318"/>
    </source>
</evidence>
<evidence type="ECO:0000305" key="2"/>
<gene>
    <name evidence="1" type="primary">rplA</name>
    <name type="ordered locus">YpsIP31758_3863</name>
</gene>
<comment type="function">
    <text evidence="1">Binds directly to 23S rRNA. The L1 stalk is quite mobile in the ribosome, and is involved in E site tRNA release.</text>
</comment>
<comment type="function">
    <text evidence="1">Protein L1 is also a translational repressor protein, it controls the translation of the L11 operon by binding to its mRNA.</text>
</comment>
<comment type="subunit">
    <text evidence="1">Part of the 50S ribosomal subunit.</text>
</comment>
<comment type="similarity">
    <text evidence="1">Belongs to the universal ribosomal protein uL1 family.</text>
</comment>
<organism>
    <name type="scientific">Yersinia pseudotuberculosis serotype O:1b (strain IP 31758)</name>
    <dbReference type="NCBI Taxonomy" id="349747"/>
    <lineage>
        <taxon>Bacteria</taxon>
        <taxon>Pseudomonadati</taxon>
        <taxon>Pseudomonadota</taxon>
        <taxon>Gammaproteobacteria</taxon>
        <taxon>Enterobacterales</taxon>
        <taxon>Yersiniaceae</taxon>
        <taxon>Yersinia</taxon>
    </lineage>
</organism>
<feature type="chain" id="PRO_1000067534" description="Large ribosomal subunit protein uL1">
    <location>
        <begin position="1"/>
        <end position="234"/>
    </location>
</feature>
<protein>
    <recommendedName>
        <fullName evidence="1">Large ribosomal subunit protein uL1</fullName>
    </recommendedName>
    <alternativeName>
        <fullName evidence="2">50S ribosomal protein L1</fullName>
    </alternativeName>
</protein>
<name>RL1_YERP3</name>
<dbReference type="EMBL" id="CP000720">
    <property type="protein sequence ID" value="ABS49405.1"/>
    <property type="molecule type" value="Genomic_DNA"/>
</dbReference>
<dbReference type="RefSeq" id="WP_002210673.1">
    <property type="nucleotide sequence ID" value="NC_009708.1"/>
</dbReference>
<dbReference type="SMR" id="A7FNI6"/>
<dbReference type="GeneID" id="57974968"/>
<dbReference type="KEGG" id="ypi:YpsIP31758_3863"/>
<dbReference type="HOGENOM" id="CLU_062853_0_0_6"/>
<dbReference type="Proteomes" id="UP000002412">
    <property type="component" value="Chromosome"/>
</dbReference>
<dbReference type="GO" id="GO:0022625">
    <property type="term" value="C:cytosolic large ribosomal subunit"/>
    <property type="evidence" value="ECO:0007669"/>
    <property type="project" value="TreeGrafter"/>
</dbReference>
<dbReference type="GO" id="GO:0019843">
    <property type="term" value="F:rRNA binding"/>
    <property type="evidence" value="ECO:0007669"/>
    <property type="project" value="UniProtKB-UniRule"/>
</dbReference>
<dbReference type="GO" id="GO:0003735">
    <property type="term" value="F:structural constituent of ribosome"/>
    <property type="evidence" value="ECO:0007669"/>
    <property type="project" value="InterPro"/>
</dbReference>
<dbReference type="GO" id="GO:0000049">
    <property type="term" value="F:tRNA binding"/>
    <property type="evidence" value="ECO:0007669"/>
    <property type="project" value="UniProtKB-KW"/>
</dbReference>
<dbReference type="GO" id="GO:0006417">
    <property type="term" value="P:regulation of translation"/>
    <property type="evidence" value="ECO:0007669"/>
    <property type="project" value="UniProtKB-KW"/>
</dbReference>
<dbReference type="GO" id="GO:0006412">
    <property type="term" value="P:translation"/>
    <property type="evidence" value="ECO:0007669"/>
    <property type="project" value="UniProtKB-UniRule"/>
</dbReference>
<dbReference type="CDD" id="cd00403">
    <property type="entry name" value="Ribosomal_L1"/>
    <property type="match status" value="1"/>
</dbReference>
<dbReference type="FunFam" id="3.40.50.790:FF:000001">
    <property type="entry name" value="50S ribosomal protein L1"/>
    <property type="match status" value="1"/>
</dbReference>
<dbReference type="Gene3D" id="3.30.190.20">
    <property type="match status" value="1"/>
</dbReference>
<dbReference type="Gene3D" id="3.40.50.790">
    <property type="match status" value="1"/>
</dbReference>
<dbReference type="HAMAP" id="MF_01318_B">
    <property type="entry name" value="Ribosomal_uL1_B"/>
    <property type="match status" value="1"/>
</dbReference>
<dbReference type="InterPro" id="IPR005878">
    <property type="entry name" value="Ribosom_uL1_bac-type"/>
</dbReference>
<dbReference type="InterPro" id="IPR002143">
    <property type="entry name" value="Ribosomal_uL1"/>
</dbReference>
<dbReference type="InterPro" id="IPR023674">
    <property type="entry name" value="Ribosomal_uL1-like"/>
</dbReference>
<dbReference type="InterPro" id="IPR028364">
    <property type="entry name" value="Ribosomal_uL1/biogenesis"/>
</dbReference>
<dbReference type="InterPro" id="IPR016095">
    <property type="entry name" value="Ribosomal_uL1_3-a/b-sand"/>
</dbReference>
<dbReference type="InterPro" id="IPR023673">
    <property type="entry name" value="Ribosomal_uL1_CS"/>
</dbReference>
<dbReference type="NCBIfam" id="TIGR01169">
    <property type="entry name" value="rplA_bact"/>
    <property type="match status" value="1"/>
</dbReference>
<dbReference type="PANTHER" id="PTHR36427">
    <property type="entry name" value="54S RIBOSOMAL PROTEIN L1, MITOCHONDRIAL"/>
    <property type="match status" value="1"/>
</dbReference>
<dbReference type="PANTHER" id="PTHR36427:SF3">
    <property type="entry name" value="LARGE RIBOSOMAL SUBUNIT PROTEIN UL1M"/>
    <property type="match status" value="1"/>
</dbReference>
<dbReference type="Pfam" id="PF00687">
    <property type="entry name" value="Ribosomal_L1"/>
    <property type="match status" value="1"/>
</dbReference>
<dbReference type="PIRSF" id="PIRSF002155">
    <property type="entry name" value="Ribosomal_L1"/>
    <property type="match status" value="1"/>
</dbReference>
<dbReference type="SUPFAM" id="SSF56808">
    <property type="entry name" value="Ribosomal protein L1"/>
    <property type="match status" value="1"/>
</dbReference>
<dbReference type="PROSITE" id="PS01199">
    <property type="entry name" value="RIBOSOMAL_L1"/>
    <property type="match status" value="1"/>
</dbReference>
<accession>A7FNI6</accession>